<gene>
    <name evidence="1" type="primary">rplK</name>
    <name type="ordered locus">Haur_0122</name>
</gene>
<protein>
    <recommendedName>
        <fullName evidence="1">Large ribosomal subunit protein uL11</fullName>
    </recommendedName>
    <alternativeName>
        <fullName evidence="2">50S ribosomal protein L11</fullName>
    </alternativeName>
</protein>
<name>RL11_HERA2</name>
<evidence type="ECO:0000255" key="1">
    <source>
        <dbReference type="HAMAP-Rule" id="MF_00736"/>
    </source>
</evidence>
<evidence type="ECO:0000305" key="2"/>
<sequence>MAKKVTAVVKLQLPAGKATPAPPVGPALGATGINIMAFCKDYNEKTSAQVGTIIPVEITVYSDRSFTYILKTPPAADLLRKAAGIQRGSGKTGTQGAGSITRAQLRQLAETKMPDLNANDIEAAEKIIAGTARSMGIAIKD</sequence>
<comment type="function">
    <text evidence="1">Forms part of the ribosomal stalk which helps the ribosome interact with GTP-bound translation factors.</text>
</comment>
<comment type="subunit">
    <text evidence="1">Part of the ribosomal stalk of the 50S ribosomal subunit. Interacts with L10 and the large rRNA to form the base of the stalk. L10 forms an elongated spine to which L12 dimers bind in a sequential fashion forming a multimeric L10(L12)X complex.</text>
</comment>
<comment type="PTM">
    <text evidence="1">One or more lysine residues are methylated.</text>
</comment>
<comment type="similarity">
    <text evidence="1">Belongs to the universal ribosomal protein uL11 family.</text>
</comment>
<keyword id="KW-0488">Methylation</keyword>
<keyword id="KW-0687">Ribonucleoprotein</keyword>
<keyword id="KW-0689">Ribosomal protein</keyword>
<keyword id="KW-0694">RNA-binding</keyword>
<keyword id="KW-0699">rRNA-binding</keyword>
<accession>A9B5E9</accession>
<dbReference type="EMBL" id="CP000875">
    <property type="protein sequence ID" value="ABX02774.1"/>
    <property type="molecule type" value="Genomic_DNA"/>
</dbReference>
<dbReference type="SMR" id="A9B5E9"/>
<dbReference type="FunCoup" id="A9B5E9">
    <property type="interactions" value="536"/>
</dbReference>
<dbReference type="STRING" id="316274.Haur_0122"/>
<dbReference type="KEGG" id="hau:Haur_0122"/>
<dbReference type="eggNOG" id="COG0080">
    <property type="taxonomic scope" value="Bacteria"/>
</dbReference>
<dbReference type="HOGENOM" id="CLU_074237_2_2_0"/>
<dbReference type="InParanoid" id="A9B5E9"/>
<dbReference type="Proteomes" id="UP000000787">
    <property type="component" value="Chromosome"/>
</dbReference>
<dbReference type="GO" id="GO:0022625">
    <property type="term" value="C:cytosolic large ribosomal subunit"/>
    <property type="evidence" value="ECO:0007669"/>
    <property type="project" value="TreeGrafter"/>
</dbReference>
<dbReference type="GO" id="GO:0070180">
    <property type="term" value="F:large ribosomal subunit rRNA binding"/>
    <property type="evidence" value="ECO:0007669"/>
    <property type="project" value="UniProtKB-UniRule"/>
</dbReference>
<dbReference type="GO" id="GO:0003735">
    <property type="term" value="F:structural constituent of ribosome"/>
    <property type="evidence" value="ECO:0007669"/>
    <property type="project" value="InterPro"/>
</dbReference>
<dbReference type="GO" id="GO:0006412">
    <property type="term" value="P:translation"/>
    <property type="evidence" value="ECO:0007669"/>
    <property type="project" value="UniProtKB-UniRule"/>
</dbReference>
<dbReference type="CDD" id="cd00349">
    <property type="entry name" value="Ribosomal_L11"/>
    <property type="match status" value="1"/>
</dbReference>
<dbReference type="FunFam" id="1.10.10.250:FF:000001">
    <property type="entry name" value="50S ribosomal protein L11"/>
    <property type="match status" value="1"/>
</dbReference>
<dbReference type="FunFam" id="3.30.1550.10:FF:000001">
    <property type="entry name" value="50S ribosomal protein L11"/>
    <property type="match status" value="1"/>
</dbReference>
<dbReference type="Gene3D" id="1.10.10.250">
    <property type="entry name" value="Ribosomal protein L11, C-terminal domain"/>
    <property type="match status" value="1"/>
</dbReference>
<dbReference type="Gene3D" id="3.30.1550.10">
    <property type="entry name" value="Ribosomal protein L11/L12, N-terminal domain"/>
    <property type="match status" value="1"/>
</dbReference>
<dbReference type="HAMAP" id="MF_00736">
    <property type="entry name" value="Ribosomal_uL11"/>
    <property type="match status" value="1"/>
</dbReference>
<dbReference type="InterPro" id="IPR000911">
    <property type="entry name" value="Ribosomal_uL11"/>
</dbReference>
<dbReference type="InterPro" id="IPR006519">
    <property type="entry name" value="Ribosomal_uL11_bac-typ"/>
</dbReference>
<dbReference type="InterPro" id="IPR020783">
    <property type="entry name" value="Ribosomal_uL11_C"/>
</dbReference>
<dbReference type="InterPro" id="IPR036769">
    <property type="entry name" value="Ribosomal_uL11_C_sf"/>
</dbReference>
<dbReference type="InterPro" id="IPR020785">
    <property type="entry name" value="Ribosomal_uL11_CS"/>
</dbReference>
<dbReference type="InterPro" id="IPR020784">
    <property type="entry name" value="Ribosomal_uL11_N"/>
</dbReference>
<dbReference type="InterPro" id="IPR036796">
    <property type="entry name" value="Ribosomal_uL11_N_sf"/>
</dbReference>
<dbReference type="NCBIfam" id="TIGR01632">
    <property type="entry name" value="L11_bact"/>
    <property type="match status" value="1"/>
</dbReference>
<dbReference type="PANTHER" id="PTHR11661">
    <property type="entry name" value="60S RIBOSOMAL PROTEIN L12"/>
    <property type="match status" value="1"/>
</dbReference>
<dbReference type="PANTHER" id="PTHR11661:SF1">
    <property type="entry name" value="LARGE RIBOSOMAL SUBUNIT PROTEIN UL11M"/>
    <property type="match status" value="1"/>
</dbReference>
<dbReference type="Pfam" id="PF00298">
    <property type="entry name" value="Ribosomal_L11"/>
    <property type="match status" value="1"/>
</dbReference>
<dbReference type="Pfam" id="PF03946">
    <property type="entry name" value="Ribosomal_L11_N"/>
    <property type="match status" value="1"/>
</dbReference>
<dbReference type="SMART" id="SM00649">
    <property type="entry name" value="RL11"/>
    <property type="match status" value="1"/>
</dbReference>
<dbReference type="SUPFAM" id="SSF54747">
    <property type="entry name" value="Ribosomal L11/L12e N-terminal domain"/>
    <property type="match status" value="1"/>
</dbReference>
<dbReference type="SUPFAM" id="SSF46906">
    <property type="entry name" value="Ribosomal protein L11, C-terminal domain"/>
    <property type="match status" value="1"/>
</dbReference>
<dbReference type="PROSITE" id="PS00359">
    <property type="entry name" value="RIBOSOMAL_L11"/>
    <property type="match status" value="1"/>
</dbReference>
<organism>
    <name type="scientific">Herpetosiphon aurantiacus (strain ATCC 23779 / DSM 785 / 114-95)</name>
    <dbReference type="NCBI Taxonomy" id="316274"/>
    <lineage>
        <taxon>Bacteria</taxon>
        <taxon>Bacillati</taxon>
        <taxon>Chloroflexota</taxon>
        <taxon>Chloroflexia</taxon>
        <taxon>Herpetosiphonales</taxon>
        <taxon>Herpetosiphonaceae</taxon>
        <taxon>Herpetosiphon</taxon>
    </lineage>
</organism>
<proteinExistence type="inferred from homology"/>
<reference key="1">
    <citation type="journal article" date="2011" name="Stand. Genomic Sci.">
        <title>Complete genome sequence of the filamentous gliding predatory bacterium Herpetosiphon aurantiacus type strain (114-95(T)).</title>
        <authorList>
            <person name="Kiss H."/>
            <person name="Nett M."/>
            <person name="Domin N."/>
            <person name="Martin K."/>
            <person name="Maresca J.A."/>
            <person name="Copeland A."/>
            <person name="Lapidus A."/>
            <person name="Lucas S."/>
            <person name="Berry K.W."/>
            <person name="Glavina Del Rio T."/>
            <person name="Dalin E."/>
            <person name="Tice H."/>
            <person name="Pitluck S."/>
            <person name="Richardson P."/>
            <person name="Bruce D."/>
            <person name="Goodwin L."/>
            <person name="Han C."/>
            <person name="Detter J.C."/>
            <person name="Schmutz J."/>
            <person name="Brettin T."/>
            <person name="Land M."/>
            <person name="Hauser L."/>
            <person name="Kyrpides N.C."/>
            <person name="Ivanova N."/>
            <person name="Goeker M."/>
            <person name="Woyke T."/>
            <person name="Klenk H.P."/>
            <person name="Bryant D.A."/>
        </authorList>
    </citation>
    <scope>NUCLEOTIDE SEQUENCE [LARGE SCALE GENOMIC DNA]</scope>
    <source>
        <strain>ATCC 23779 / DSM 785 / 114-95</strain>
    </source>
</reference>
<feature type="chain" id="PRO_1000195652" description="Large ribosomal subunit protein uL11">
    <location>
        <begin position="1"/>
        <end position="141"/>
    </location>
</feature>